<accession>A0A9E7S5B9</accession>
<keyword id="KW-0017">Alkaloid metabolism</keyword>
<keyword id="KW-0521">NADP</keyword>
<keyword id="KW-0560">Oxidoreductase</keyword>
<comment type="function">
    <text evidence="3">Oxidoreductase involved in the biosynthesis of akuammilan monoterpene indole alkaloids (MIAs) natural products, components with various biological properties such as antidiabetic, antibacterial, anti-inflammatory, anticancer, and antimalarial activities (PubMed:36349266). Catalyzes the conversion of rhazimal to rhazimol (PubMed:36349266).</text>
</comment>
<comment type="catalytic activity">
    <reaction evidence="3">
        <text>rhazimol + NADP(+) = rhazimal + NADPH + 2 H(+)</text>
        <dbReference type="Rhea" id="RHEA:79615"/>
        <dbReference type="ChEBI" id="CHEBI:15378"/>
        <dbReference type="ChEBI" id="CHEBI:57783"/>
        <dbReference type="ChEBI" id="CHEBI:58349"/>
        <dbReference type="ChEBI" id="CHEBI:230473"/>
        <dbReference type="ChEBI" id="CHEBI:230474"/>
        <dbReference type="EC" id="1.1.1.440"/>
    </reaction>
    <physiologicalReaction direction="right-to-left" evidence="3">
        <dbReference type="Rhea" id="RHEA:79617"/>
    </physiologicalReaction>
</comment>
<comment type="biophysicochemical properties">
    <phDependence>
        <text evidence="3">Optimum pH is 7-8.</text>
    </phDependence>
    <temperatureDependence>
        <text evidence="3">Optimum temperature is 42 degrees Celsius.</text>
    </temperatureDependence>
</comment>
<comment type="pathway">
    <text evidence="3">Alkaloid biosynthesis.</text>
</comment>
<comment type="subunit">
    <text evidence="1">Monomer.</text>
</comment>
<comment type="similarity">
    <text evidence="5">Belongs to the aldo/keto reductase family.</text>
</comment>
<gene>
    <name evidence="4" type="primary">RHR2</name>
</gene>
<proteinExistence type="evidence at protein level"/>
<evidence type="ECO:0000250" key="1">
    <source>
        <dbReference type="UniProtKB" id="P46336"/>
    </source>
</evidence>
<evidence type="ECO:0000250" key="2">
    <source>
        <dbReference type="UniProtKB" id="Q8CG76"/>
    </source>
</evidence>
<evidence type="ECO:0000269" key="3">
    <source>
    </source>
</evidence>
<evidence type="ECO:0000303" key="4">
    <source>
    </source>
</evidence>
<evidence type="ECO:0000305" key="5"/>
<evidence type="ECO:0000312" key="6">
    <source>
        <dbReference type="EMBL" id="URS65386.1"/>
    </source>
</evidence>
<protein>
    <recommendedName>
        <fullName evidence="4">Rhazimal reductase 2</fullName>
        <shortName evidence="4">AsRHR2</shortName>
        <ecNumber evidence="3">1.1.1.440</ecNumber>
    </recommendedName>
</protein>
<dbReference type="EC" id="1.1.1.440" evidence="3"/>
<dbReference type="EMBL" id="OM323331">
    <property type="protein sequence ID" value="URS65386.1"/>
    <property type="molecule type" value="mRNA"/>
</dbReference>
<dbReference type="KEGG" id="ag:URS65386"/>
<dbReference type="GO" id="GO:0016491">
    <property type="term" value="F:oxidoreductase activity"/>
    <property type="evidence" value="ECO:0000314"/>
    <property type="project" value="UniProtKB"/>
</dbReference>
<dbReference type="GO" id="GO:0035835">
    <property type="term" value="P:indole alkaloid biosynthetic process"/>
    <property type="evidence" value="ECO:0000314"/>
    <property type="project" value="UniProtKB"/>
</dbReference>
<dbReference type="FunFam" id="3.20.20.100:FF:000013">
    <property type="entry name" value="NADPH-dependent codeinone reductase 1-1"/>
    <property type="match status" value="1"/>
</dbReference>
<dbReference type="Gene3D" id="3.20.20.100">
    <property type="entry name" value="NADP-dependent oxidoreductase domain"/>
    <property type="match status" value="1"/>
</dbReference>
<dbReference type="InterPro" id="IPR020471">
    <property type="entry name" value="AKR"/>
</dbReference>
<dbReference type="InterPro" id="IPR018170">
    <property type="entry name" value="Aldo/ket_reductase_CS"/>
</dbReference>
<dbReference type="InterPro" id="IPR023210">
    <property type="entry name" value="NADP_OxRdtase_dom"/>
</dbReference>
<dbReference type="InterPro" id="IPR036812">
    <property type="entry name" value="NADP_OxRdtase_dom_sf"/>
</dbReference>
<dbReference type="PANTHER" id="PTHR11732">
    <property type="entry name" value="ALDO/KETO REDUCTASE"/>
    <property type="match status" value="1"/>
</dbReference>
<dbReference type="Pfam" id="PF00248">
    <property type="entry name" value="Aldo_ket_red"/>
    <property type="match status" value="1"/>
</dbReference>
<dbReference type="PIRSF" id="PIRSF000097">
    <property type="entry name" value="AKR"/>
    <property type="match status" value="1"/>
</dbReference>
<dbReference type="PRINTS" id="PR00069">
    <property type="entry name" value="ALDKETRDTASE"/>
</dbReference>
<dbReference type="SUPFAM" id="SSF51430">
    <property type="entry name" value="NAD(P)-linked oxidoreductase"/>
    <property type="match status" value="1"/>
</dbReference>
<dbReference type="PROSITE" id="PS00798">
    <property type="entry name" value="ALDOKETO_REDUCTASE_1"/>
    <property type="match status" value="1"/>
</dbReference>
<dbReference type="PROSITE" id="PS00062">
    <property type="entry name" value="ALDOKETO_REDUCTASE_2"/>
    <property type="match status" value="1"/>
</dbReference>
<organism>
    <name type="scientific">Alstonia scholaris</name>
    <name type="common">Dogbane</name>
    <name type="synonym">Echites scholaris</name>
    <dbReference type="NCBI Taxonomy" id="52822"/>
    <lineage>
        <taxon>Eukaryota</taxon>
        <taxon>Viridiplantae</taxon>
        <taxon>Streptophyta</taxon>
        <taxon>Embryophyta</taxon>
        <taxon>Tracheophyta</taxon>
        <taxon>Spermatophyta</taxon>
        <taxon>Magnoliopsida</taxon>
        <taxon>eudicotyledons</taxon>
        <taxon>Gunneridae</taxon>
        <taxon>Pentapetalae</taxon>
        <taxon>asterids</taxon>
        <taxon>lamiids</taxon>
        <taxon>Gentianales</taxon>
        <taxon>Apocynaceae</taxon>
        <taxon>Rauvolfioideae</taxon>
        <taxon>Alstonieae</taxon>
        <taxon>Alstonia</taxon>
    </lineage>
</organism>
<sequence length="323" mass="36727">MEKQVQMPEVELNSDHKMPLVGFGTCIPDPIPPLEELATIFLEVIKVGYRHFDTASCYGTEEALGKAVAQAIESGLVNGREEFFITSKLWVEDADQDLILPALKKTLGNLGLDYLDLYLIHMPLRLRQGAEMFKYTKEDFLPFDIKGTWKAMEECSKLGLCKSIGVSNYSCEKLSKLLENATILPAVNQVEMNVVWKQSKLLPFCKEKNIHVSAWSPLLSYGSIWSQNAVMENTVLVDIAASKSKTVAQVALRWIYEQGASFIMRTFNKERMYQNVQIFDWELTQEELDQIQQIPQRRSNLAEAFVHPEGPIKSVEELWDGDL</sequence>
<feature type="chain" id="PRO_0000462242" description="Rhazimal reductase 2">
    <location>
        <begin position="1"/>
        <end position="323"/>
    </location>
</feature>
<feature type="active site" description="Proton donor" evidence="2">
    <location>
        <position position="58"/>
    </location>
</feature>
<feature type="binding site" evidence="2">
    <location>
        <position position="53"/>
    </location>
    <ligand>
        <name>NADP(+)</name>
        <dbReference type="ChEBI" id="CHEBI:58349"/>
    </ligand>
</feature>
<feature type="binding site" evidence="2">
    <location>
        <begin position="167"/>
        <end position="168"/>
    </location>
    <ligand>
        <name>NADP(+)</name>
        <dbReference type="ChEBI" id="CHEBI:58349"/>
    </ligand>
</feature>
<feature type="binding site" evidence="2">
    <location>
        <position position="189"/>
    </location>
    <ligand>
        <name>NADP(+)</name>
        <dbReference type="ChEBI" id="CHEBI:58349"/>
    </ligand>
</feature>
<feature type="binding site" evidence="1">
    <location>
        <begin position="215"/>
        <end position="220"/>
    </location>
    <ligand>
        <name>NADP(+)</name>
        <dbReference type="ChEBI" id="CHEBI:58349"/>
    </ligand>
</feature>
<feature type="binding site" evidence="2">
    <location>
        <begin position="289"/>
        <end position="297"/>
    </location>
    <ligand>
        <name>NADP(+)</name>
        <dbReference type="ChEBI" id="CHEBI:58349"/>
    </ligand>
</feature>
<feature type="site" description="Lowers pKa of active site Tyr" evidence="1">
    <location>
        <position position="88"/>
    </location>
</feature>
<reference evidence="6" key="1">
    <citation type="journal article" date="2022" name="Chem. Sci.">
        <title>Deciphering and reprogramming the cyclization regioselectivity in bifurcation of indole alkaloid biosynthesis.</title>
        <authorList>
            <person name="Wang Z."/>
            <person name="Xiao Y."/>
            <person name="Wu S."/>
            <person name="Chen J."/>
            <person name="Li A."/>
            <person name="Tatsis E.C."/>
        </authorList>
    </citation>
    <scope>NUCLEOTIDE SEQUENCE [MRNA]</scope>
    <scope>FUNCTION</scope>
    <scope>CATALYTIC ACTIVITY</scope>
    <scope>PATHWAY</scope>
    <scope>BIOPHYSICOCHEMICAL PROPERTIES</scope>
</reference>
<name>RHR2_ALSSC</name>